<dbReference type="EC" id="4.2.1.41" evidence="1"/>
<dbReference type="EMBL" id="CP000634">
    <property type="protein sequence ID" value="ACM38782.1"/>
    <property type="molecule type" value="Genomic_DNA"/>
</dbReference>
<dbReference type="SMR" id="B9K1N4"/>
<dbReference type="STRING" id="311402.Avi_5701"/>
<dbReference type="KEGG" id="avi:Avi_5701"/>
<dbReference type="eggNOG" id="COG0329">
    <property type="taxonomic scope" value="Bacteria"/>
</dbReference>
<dbReference type="HOGENOM" id="CLU_049343_5_2_5"/>
<dbReference type="UniPathway" id="UPA00564">
    <property type="reaction ID" value="UER00628"/>
</dbReference>
<dbReference type="Proteomes" id="UP000001596">
    <property type="component" value="Chromosome 2"/>
</dbReference>
<dbReference type="GO" id="GO:0008840">
    <property type="term" value="F:4-hydroxy-tetrahydrodipicolinate synthase activity"/>
    <property type="evidence" value="ECO:0007669"/>
    <property type="project" value="TreeGrafter"/>
</dbReference>
<dbReference type="GO" id="GO:0047448">
    <property type="term" value="F:5-dehydro-4-deoxyglucarate dehydratase activity"/>
    <property type="evidence" value="ECO:0007669"/>
    <property type="project" value="UniProtKB-UniRule"/>
</dbReference>
<dbReference type="GO" id="GO:0042838">
    <property type="term" value="P:D-glucarate catabolic process"/>
    <property type="evidence" value="ECO:0007669"/>
    <property type="project" value="UniProtKB-UniRule"/>
</dbReference>
<dbReference type="CDD" id="cd00951">
    <property type="entry name" value="KDGDH"/>
    <property type="match status" value="1"/>
</dbReference>
<dbReference type="Gene3D" id="3.20.20.70">
    <property type="entry name" value="Aldolase class I"/>
    <property type="match status" value="1"/>
</dbReference>
<dbReference type="HAMAP" id="MF_00694">
    <property type="entry name" value="KDGDH"/>
    <property type="match status" value="1"/>
</dbReference>
<dbReference type="InterPro" id="IPR013785">
    <property type="entry name" value="Aldolase_TIM"/>
</dbReference>
<dbReference type="InterPro" id="IPR002220">
    <property type="entry name" value="DapA-like"/>
</dbReference>
<dbReference type="InterPro" id="IPR017655">
    <property type="entry name" value="Dehydro-deoxyglucarate_dehyd"/>
</dbReference>
<dbReference type="NCBIfam" id="TIGR03249">
    <property type="entry name" value="KdgD"/>
    <property type="match status" value="1"/>
</dbReference>
<dbReference type="NCBIfam" id="NF002958">
    <property type="entry name" value="PRK03620.1"/>
    <property type="match status" value="1"/>
</dbReference>
<dbReference type="PANTHER" id="PTHR12128:SF19">
    <property type="entry name" value="5-DEHYDRO-4-DEOXYGLUCARATE DEHYDRATASE 2-RELATED"/>
    <property type="match status" value="1"/>
</dbReference>
<dbReference type="PANTHER" id="PTHR12128">
    <property type="entry name" value="DIHYDRODIPICOLINATE SYNTHASE"/>
    <property type="match status" value="1"/>
</dbReference>
<dbReference type="Pfam" id="PF00701">
    <property type="entry name" value="DHDPS"/>
    <property type="match status" value="1"/>
</dbReference>
<dbReference type="PIRSF" id="PIRSF001365">
    <property type="entry name" value="DHDPS"/>
    <property type="match status" value="1"/>
</dbReference>
<dbReference type="SMART" id="SM01130">
    <property type="entry name" value="DHDPS"/>
    <property type="match status" value="1"/>
</dbReference>
<dbReference type="SUPFAM" id="SSF51569">
    <property type="entry name" value="Aldolase"/>
    <property type="match status" value="1"/>
</dbReference>
<feature type="chain" id="PRO_1000147905" description="Probable 5-dehydro-4-deoxyglucarate dehydratase">
    <location>
        <begin position="1"/>
        <end position="301"/>
    </location>
</feature>
<reference key="1">
    <citation type="journal article" date="2009" name="J. Bacteriol.">
        <title>Genome sequences of three Agrobacterium biovars help elucidate the evolution of multichromosome genomes in bacteria.</title>
        <authorList>
            <person name="Slater S.C."/>
            <person name="Goldman B.S."/>
            <person name="Goodner B."/>
            <person name="Setubal J.C."/>
            <person name="Farrand S.K."/>
            <person name="Nester E.W."/>
            <person name="Burr T.J."/>
            <person name="Banta L."/>
            <person name="Dickerman A.W."/>
            <person name="Paulsen I."/>
            <person name="Otten L."/>
            <person name="Suen G."/>
            <person name="Welch R."/>
            <person name="Almeida N.F."/>
            <person name="Arnold F."/>
            <person name="Burton O.T."/>
            <person name="Du Z."/>
            <person name="Ewing A."/>
            <person name="Godsy E."/>
            <person name="Heisel S."/>
            <person name="Houmiel K.L."/>
            <person name="Jhaveri J."/>
            <person name="Lu J."/>
            <person name="Miller N.M."/>
            <person name="Norton S."/>
            <person name="Chen Q."/>
            <person name="Phoolcharoen W."/>
            <person name="Ohlin V."/>
            <person name="Ondrusek D."/>
            <person name="Pride N."/>
            <person name="Stricklin S.L."/>
            <person name="Sun J."/>
            <person name="Wheeler C."/>
            <person name="Wilson L."/>
            <person name="Zhu H."/>
            <person name="Wood D.W."/>
        </authorList>
    </citation>
    <scope>NUCLEOTIDE SEQUENCE [LARGE SCALE GENOMIC DNA]</scope>
    <source>
        <strain>ATCC BAA-846 / DSM 112012 / S4</strain>
    </source>
</reference>
<accession>B9K1N4</accession>
<name>KDGD_ALLAM</name>
<protein>
    <recommendedName>
        <fullName evidence="1">Probable 5-dehydro-4-deoxyglucarate dehydratase</fullName>
        <ecNumber evidence="1">4.2.1.41</ecNumber>
    </recommendedName>
    <alternativeName>
        <fullName evidence="1">5-keto-4-deoxy-glucarate dehydratase</fullName>
        <shortName evidence="1">KDGDH</shortName>
    </alternativeName>
</protein>
<evidence type="ECO:0000255" key="1">
    <source>
        <dbReference type="HAMAP-Rule" id="MF_00694"/>
    </source>
</evidence>
<keyword id="KW-0456">Lyase</keyword>
<keyword id="KW-1185">Reference proteome</keyword>
<proteinExistence type="inferred from homology"/>
<comment type="catalytic activity">
    <reaction evidence="1">
        <text>5-dehydro-4-deoxy-D-glucarate + H(+) = 2,5-dioxopentanoate + CO2 + H2O</text>
        <dbReference type="Rhea" id="RHEA:24608"/>
        <dbReference type="ChEBI" id="CHEBI:15377"/>
        <dbReference type="ChEBI" id="CHEBI:15378"/>
        <dbReference type="ChEBI" id="CHEBI:16526"/>
        <dbReference type="ChEBI" id="CHEBI:42819"/>
        <dbReference type="ChEBI" id="CHEBI:58136"/>
        <dbReference type="EC" id="4.2.1.41"/>
    </reaction>
</comment>
<comment type="pathway">
    <text evidence="1">Carbohydrate acid metabolism; D-glucarate degradation; 2,5-dioxopentanoate from D-glucarate: step 2/2.</text>
</comment>
<comment type="similarity">
    <text evidence="1">Belongs to the DapA family.</text>
</comment>
<organism>
    <name type="scientific">Allorhizobium ampelinum (strain ATCC BAA-846 / DSM 112012 / S4)</name>
    <name type="common">Agrobacterium vitis (strain S4)</name>
    <dbReference type="NCBI Taxonomy" id="311402"/>
    <lineage>
        <taxon>Bacteria</taxon>
        <taxon>Pseudomonadati</taxon>
        <taxon>Pseudomonadota</taxon>
        <taxon>Alphaproteobacteria</taxon>
        <taxon>Hyphomicrobiales</taxon>
        <taxon>Rhizobiaceae</taxon>
        <taxon>Rhizobium/Agrobacterium group</taxon>
        <taxon>Allorhizobium</taxon>
        <taxon>Allorhizobium ampelinum</taxon>
    </lineage>
</organism>
<gene>
    <name type="ordered locus">Avi_5701</name>
</gene>
<sequence length="301" mass="31957">MEPNELKRALGAGLLSFPVTPFDDKGEFNPDVYGAHIDWLSGYDATVLFAAGGTGEMFSLSPDEIPNIVATAKAASNGVPIVGGCGGGTRVAVEIAKGIEKAGGDGILLLPQYLIDAPQAGLYAHVKAVCDAVGFGVTVYNRDNCVLQTETIQRLADDCPNLIGFKDGTGELGLVRRITATLGDRLTYIGGMPTAELFAEAYLGAGFSTYSSAVFNFVPQLACDFYKALRAGDRATCENILNRFFFPFMDLRSRQKGYAVAAIKAGVRLQGFAAGSVRPPLTDLTSQEVDILAGLIEPWKQ</sequence>